<accession>P11928</accession>
<accession>F2Z419</accession>
<accession>Q3UEC1</accession>
<accession>Q64440</accession>
<accession>Q91VI0</accession>
<keyword id="KW-0051">Antiviral defense</keyword>
<keyword id="KW-0067">ATP-binding</keyword>
<keyword id="KW-0963">Cytoplasm</keyword>
<keyword id="KW-0256">Endoplasmic reticulum</keyword>
<keyword id="KW-0391">Immunity</keyword>
<keyword id="KW-0399">Innate immunity</keyword>
<keyword id="KW-0449">Lipoprotein</keyword>
<keyword id="KW-0460">Magnesium</keyword>
<keyword id="KW-0479">Metal-binding</keyword>
<keyword id="KW-0492">Microsome</keyword>
<keyword id="KW-0496">Mitochondrion</keyword>
<keyword id="KW-0547">Nucleotide-binding</keyword>
<keyword id="KW-0548">Nucleotidyltransferase</keyword>
<keyword id="KW-0539">Nucleus</keyword>
<keyword id="KW-0636">Prenylation</keyword>
<keyword id="KW-1185">Reference proteome</keyword>
<keyword id="KW-0694">RNA-binding</keyword>
<keyword id="KW-0808">Transferase</keyword>
<proteinExistence type="evidence at protein level"/>
<evidence type="ECO:0000250" key="1">
    <source>
        <dbReference type="UniProtKB" id="P00973"/>
    </source>
</evidence>
<evidence type="ECO:0000250" key="2">
    <source>
        <dbReference type="UniProtKB" id="P29728"/>
    </source>
</evidence>
<evidence type="ECO:0000269" key="3">
    <source>
    </source>
</evidence>
<evidence type="ECO:0000269" key="4">
    <source>
    </source>
</evidence>
<evidence type="ECO:0000269" key="5">
    <source>
    </source>
</evidence>
<evidence type="ECO:0000269" key="6">
    <source>
    </source>
</evidence>
<evidence type="ECO:0000269" key="7">
    <source>
    </source>
</evidence>
<evidence type="ECO:0000269" key="8">
    <source>
    </source>
</evidence>
<evidence type="ECO:0000269" key="9">
    <source>
    </source>
</evidence>
<evidence type="ECO:0000305" key="10"/>
<evidence type="ECO:0000305" key="11">
    <source>
    </source>
</evidence>
<evidence type="ECO:0000305" key="12">
    <source>
    </source>
</evidence>
<feature type="chain" id="PRO_0000160260" description="2'-5'-oligoadenylate synthase 1A">
    <location>
        <begin position="1"/>
        <end position="367"/>
    </location>
</feature>
<feature type="region of interest" description="Interaction with dsRNA" evidence="1">
    <location>
        <begin position="14"/>
        <end position="61"/>
    </location>
</feature>
<feature type="region of interest" description="Interaction with dsRNA" evidence="1">
    <location>
        <begin position="201"/>
        <end position="211"/>
    </location>
</feature>
<feature type="binding site" evidence="1">
    <location>
        <position position="64"/>
    </location>
    <ligand>
        <name>ATP</name>
        <dbReference type="ChEBI" id="CHEBI:30616"/>
    </ligand>
</feature>
<feature type="binding site" evidence="1">
    <location>
        <position position="76"/>
    </location>
    <ligand>
        <name>Mg(2+)</name>
        <dbReference type="ChEBI" id="CHEBI:18420"/>
        <note>catalytic</note>
    </ligand>
</feature>
<feature type="binding site" evidence="1">
    <location>
        <position position="78"/>
    </location>
    <ligand>
        <name>Mg(2+)</name>
        <dbReference type="ChEBI" id="CHEBI:18420"/>
        <note>catalytic</note>
    </ligand>
</feature>
<feature type="binding site" evidence="1">
    <location>
        <position position="149"/>
    </location>
    <ligand>
        <name>Mg(2+)</name>
        <dbReference type="ChEBI" id="CHEBI:18420"/>
        <note>catalytic</note>
    </ligand>
</feature>
<feature type="binding site" evidence="2">
    <location>
        <position position="211"/>
    </location>
    <ligand>
        <name>ATP</name>
        <dbReference type="ChEBI" id="CHEBI:30616"/>
    </ligand>
</feature>
<feature type="binding site" evidence="1">
    <location>
        <position position="214"/>
    </location>
    <ligand>
        <name>ATP</name>
        <dbReference type="ChEBI" id="CHEBI:30616"/>
    </ligand>
</feature>
<feature type="binding site" evidence="1">
    <location>
        <position position="231"/>
    </location>
    <ligand>
        <name>ATP</name>
        <dbReference type="ChEBI" id="CHEBI:30616"/>
    </ligand>
</feature>
<feature type="lipid moiety-binding region" description="S-geranylgeranyl cysteine" evidence="12">
    <location>
        <position position="364"/>
    </location>
</feature>
<feature type="sequence conflict" description="In Ref. 1; CAA28620 and 2; AAA37116." evidence="10" ref="1 2">
    <original>K</original>
    <variation>R</variation>
    <location>
        <position position="74"/>
    </location>
</feature>
<feature type="sequence conflict" description="In Ref. 8; CAA41105." evidence="10" ref="8">
    <original>E</original>
    <variation>W</variation>
    <location>
        <position position="176"/>
    </location>
</feature>
<feature type="sequence conflict" description="In Ref. 8; CAA41105." evidence="10" ref="8">
    <original>F</original>
    <variation>Y</variation>
    <location>
        <position position="240"/>
    </location>
</feature>
<feature type="sequence conflict" description="In Ref. 8; CAA41105." evidence="10" ref="8">
    <original>Y</original>
    <variation>N</variation>
    <location>
        <position position="249"/>
    </location>
</feature>
<feature type="sequence conflict" description="In Ref. 8; CAA41105." evidence="10" ref="8">
    <original>Q</original>
    <variation>K</variation>
    <location>
        <position position="283"/>
    </location>
</feature>
<feature type="sequence conflict" description="In Ref. 7; AAH57878/AAH13715." evidence="10" ref="7">
    <original>L</original>
    <variation>V</variation>
    <location>
        <position position="329"/>
    </location>
</feature>
<organism>
    <name type="scientific">Mus musculus</name>
    <name type="common">Mouse</name>
    <dbReference type="NCBI Taxonomy" id="10090"/>
    <lineage>
        <taxon>Eukaryota</taxon>
        <taxon>Metazoa</taxon>
        <taxon>Chordata</taxon>
        <taxon>Craniata</taxon>
        <taxon>Vertebrata</taxon>
        <taxon>Euteleostomi</taxon>
        <taxon>Mammalia</taxon>
        <taxon>Eutheria</taxon>
        <taxon>Euarchontoglires</taxon>
        <taxon>Glires</taxon>
        <taxon>Rodentia</taxon>
        <taxon>Myomorpha</taxon>
        <taxon>Muroidea</taxon>
        <taxon>Muridae</taxon>
        <taxon>Murinae</taxon>
        <taxon>Mus</taxon>
        <taxon>Mus</taxon>
    </lineage>
</organism>
<name>OAS1A_MOUSE</name>
<gene>
    <name type="primary">Oas1a</name>
    <name type="synonym">Oias1</name>
</gene>
<comment type="function">
    <text evidence="3 9">Interferon-induced, dsRNA-activated antiviral enzyme which plays a critical role in cellular innate antiviral response. In addition, it may also play a role in other cellular processes such as apoptosis, cell growth, differentiation and gene regulation. Synthesizes higher oligomers of 2'-5'-oligoadenylates (2-5A) from ATP which then bind to the inactive monomeric form of ribonuclease L (RNase L) leading to its dimerization and subsequent activation. Activation of RNase L leads to degradation of cellular as well as viral RNA, resulting in the inhibition of protein synthesis, thus terminating viral replication. Can mediate the antiviral effect via the classical RNase L-dependent pathway or an alternative antiviral pathway independent of RNase L.</text>
</comment>
<comment type="catalytic activity">
    <reaction evidence="3 4 6 11">
        <text>3 ATP = 5'-triphosphoadenylyl-(2'-&gt;5')-adenylyl-(2'-&gt;5')-adenosine + 2 diphosphate</text>
        <dbReference type="Rhea" id="RHEA:34407"/>
        <dbReference type="ChEBI" id="CHEBI:30616"/>
        <dbReference type="ChEBI" id="CHEBI:33019"/>
        <dbReference type="ChEBI" id="CHEBI:67143"/>
        <dbReference type="EC" id="2.7.7.84"/>
    </reaction>
</comment>
<comment type="cofactor">
    <cofactor evidence="1">
        <name>Mg(2+)</name>
        <dbReference type="ChEBI" id="CHEBI:18420"/>
    </cofactor>
</comment>
<comment type="activity regulation">
    <text>Produced as a latent enzyme which is activated by dsRNA generated during the course of viral infection. The dsRNA activator must be at least 15 nucleotides long, and no modification of the 2'-hydroxyl group is tolerated. ssRNA or dsDNA do not act as activators.</text>
</comment>
<comment type="subunit">
    <text evidence="1 4">Monomer (By similarity). Homotetramer (By similarity). Interacts with OAS1D; the interaction inhibits OAS1A catalytic activity (PubMed:15899864).</text>
</comment>
<comment type="interaction">
    <interactant intactId="EBI-9352099">
        <id>P11928</id>
    </interactant>
    <interactant intactId="EBI-10107989">
        <id>O89168</id>
    </interactant>
    <organismsDiffer>true</organismsDiffer>
    <experiments>5</experiments>
</comment>
<comment type="subcellular location">
    <subcellularLocation>
        <location evidence="4">Cytoplasm</location>
    </subcellularLocation>
    <subcellularLocation>
        <location evidence="1">Mitochondrion</location>
    </subcellularLocation>
    <subcellularLocation>
        <location evidence="1">Nucleus</location>
    </subcellularLocation>
    <subcellularLocation>
        <location evidence="1">Microsome</location>
    </subcellularLocation>
    <subcellularLocation>
        <location evidence="1">Endoplasmic reticulum</location>
    </subcellularLocation>
    <text evidence="1">Associated with different subcellular fractions such as mitochondrial, nuclear, and rough/smooth microsomal fractions.</text>
</comment>
<comment type="tissue specificity">
    <text evidence="3 4 8">Expressed in oocytes and granulosa cells of ovary, in intestine, stomach, spleen and uterus (at protein level) (PubMed:15899864). Expressed at high levels in the digestive tract and lymphoid organs (PubMed:12396720). Expressed in ovary and spleen (PubMed:27663720).</text>
</comment>
<comment type="developmental stage">
    <text evidence="4 8">Detected 5 weeks after birth in developing ovary and spleen (PubMed:27663720). Expressed in fully grown, germinal vesicle (GV)-intact oocytes, in oocytes at the metaphase II stage and in the 2- to 8-cell embryos (PubMed:15899864).</text>
</comment>
<comment type="induction">
    <text evidence="4 5 7 8">Up-regulated in response to the type I interferon IFNB1, in a STAT1 and STAT2-dependent manner (PubMed:1709495, PubMed:22305621). Induced by polyinosinic:polycytidylic acid (poly I:C) (PubMed:15899864, PubMed:27663720).</text>
</comment>
<comment type="PTM">
    <text evidence="12">C-terminal prenylated.</text>
</comment>
<comment type="similarity">
    <text evidence="10">Belongs to the 2-5A synthase family.</text>
</comment>
<dbReference type="EC" id="2.7.7.84" evidence="3 4 6 11"/>
<dbReference type="EMBL" id="X04958">
    <property type="protein sequence ID" value="CAA28620.1"/>
    <property type="molecule type" value="mRNA"/>
</dbReference>
<dbReference type="EMBL" id="M33863">
    <property type="protein sequence ID" value="AAA37116.1"/>
    <property type="molecule type" value="mRNA"/>
</dbReference>
<dbReference type="EMBL" id="AK149613">
    <property type="protein sequence ID" value="BAE28990.1"/>
    <property type="molecule type" value="mRNA"/>
</dbReference>
<dbReference type="EMBL" id="AC015535">
    <property type="status" value="NOT_ANNOTATED_CDS"/>
    <property type="molecule type" value="Genomic_DNA"/>
</dbReference>
<dbReference type="EMBL" id="CH466529">
    <property type="protein sequence ID" value="EDL19743.1"/>
    <property type="molecule type" value="Genomic_DNA"/>
</dbReference>
<dbReference type="EMBL" id="BC013715">
    <property type="protein sequence ID" value="AAH13715.1"/>
    <property type="molecule type" value="mRNA"/>
</dbReference>
<dbReference type="EMBL" id="BC057878">
    <property type="protein sequence ID" value="AAH57878.1"/>
    <property type="molecule type" value="mRNA"/>
</dbReference>
<dbReference type="EMBL" id="X58077">
    <property type="protein sequence ID" value="CAA41105.1"/>
    <property type="molecule type" value="mRNA"/>
</dbReference>
<dbReference type="CCDS" id="CCDS19630.1"/>
<dbReference type="PIR" id="A24725">
    <property type="entry name" value="SYMSO1"/>
</dbReference>
<dbReference type="PIR" id="S15660">
    <property type="entry name" value="S15660"/>
</dbReference>
<dbReference type="RefSeq" id="NP_660212.2">
    <property type="nucleotide sequence ID" value="NM_145211.2"/>
</dbReference>
<dbReference type="SMR" id="P11928"/>
<dbReference type="BioGRID" id="232938">
    <property type="interactions" value="3"/>
</dbReference>
<dbReference type="FunCoup" id="P11928">
    <property type="interactions" value="452"/>
</dbReference>
<dbReference type="IntAct" id="P11928">
    <property type="interactions" value="1"/>
</dbReference>
<dbReference type="STRING" id="10090.ENSMUSP00000079198"/>
<dbReference type="PhosphoSitePlus" id="P11928"/>
<dbReference type="SwissPalm" id="P11928"/>
<dbReference type="PaxDb" id="10090-ENSMUSP00000079198"/>
<dbReference type="PeptideAtlas" id="P11928"/>
<dbReference type="ProteomicsDB" id="293916"/>
<dbReference type="DNASU" id="246730"/>
<dbReference type="Ensembl" id="ENSMUST00000080322.8">
    <property type="protein sequence ID" value="ENSMUSP00000079198.8"/>
    <property type="gene ID" value="ENSMUSG00000052776.11"/>
</dbReference>
<dbReference type="GeneID" id="246730"/>
<dbReference type="KEGG" id="mmu:246730"/>
<dbReference type="UCSC" id="uc008zij.2">
    <property type="organism name" value="mouse"/>
</dbReference>
<dbReference type="AGR" id="MGI:2180860"/>
<dbReference type="CTD" id="246730"/>
<dbReference type="MGI" id="MGI:2180860">
    <property type="gene designation" value="Oas1a"/>
</dbReference>
<dbReference type="VEuPathDB" id="HostDB:ENSMUSG00000052776"/>
<dbReference type="eggNOG" id="KOG0001">
    <property type="taxonomic scope" value="Eukaryota"/>
</dbReference>
<dbReference type="GeneTree" id="ENSGT00510000046406"/>
<dbReference type="HOGENOM" id="CLU_040930_0_0_1"/>
<dbReference type="InParanoid" id="P11928"/>
<dbReference type="OMA" id="SWILLPQ"/>
<dbReference type="OrthoDB" id="1885901at2759"/>
<dbReference type="PhylomeDB" id="P11928"/>
<dbReference type="TreeFam" id="TF329749"/>
<dbReference type="BRENDA" id="2.7.7.84">
    <property type="organism ID" value="3474"/>
</dbReference>
<dbReference type="BioGRID-ORCS" id="246730">
    <property type="hits" value="2 hits in 77 CRISPR screens"/>
</dbReference>
<dbReference type="ChiTaRS" id="Oas1a">
    <property type="organism name" value="mouse"/>
</dbReference>
<dbReference type="PRO" id="PR:P11928"/>
<dbReference type="Proteomes" id="UP000000589">
    <property type="component" value="Chromosome 5"/>
</dbReference>
<dbReference type="RNAct" id="P11928">
    <property type="molecule type" value="protein"/>
</dbReference>
<dbReference type="Bgee" id="ENSMUSG00000052776">
    <property type="expression patterns" value="Expressed in granulocyte and 68 other cell types or tissues"/>
</dbReference>
<dbReference type="GO" id="GO:0005783">
    <property type="term" value="C:endoplasmic reticulum"/>
    <property type="evidence" value="ECO:0007669"/>
    <property type="project" value="UniProtKB-SubCell"/>
</dbReference>
<dbReference type="GO" id="GO:0005739">
    <property type="term" value="C:mitochondrion"/>
    <property type="evidence" value="ECO:0007669"/>
    <property type="project" value="UniProtKB-SubCell"/>
</dbReference>
<dbReference type="GO" id="GO:0005634">
    <property type="term" value="C:nucleus"/>
    <property type="evidence" value="ECO:0007669"/>
    <property type="project" value="UniProtKB-SubCell"/>
</dbReference>
<dbReference type="GO" id="GO:0001730">
    <property type="term" value="F:2'-5'-oligoadenylate synthetase activity"/>
    <property type="evidence" value="ECO:0000314"/>
    <property type="project" value="UniProtKB"/>
</dbReference>
<dbReference type="GO" id="GO:0005524">
    <property type="term" value="F:ATP binding"/>
    <property type="evidence" value="ECO:0007669"/>
    <property type="project" value="UniProtKB-KW"/>
</dbReference>
<dbReference type="GO" id="GO:0003725">
    <property type="term" value="F:double-stranded RNA binding"/>
    <property type="evidence" value="ECO:0000314"/>
    <property type="project" value="UniProtKB"/>
</dbReference>
<dbReference type="GO" id="GO:0046872">
    <property type="term" value="F:metal ion binding"/>
    <property type="evidence" value="ECO:0007669"/>
    <property type="project" value="UniProtKB-KW"/>
</dbReference>
<dbReference type="GO" id="GO:0051607">
    <property type="term" value="P:defense response to virus"/>
    <property type="evidence" value="ECO:0007669"/>
    <property type="project" value="UniProtKB-KW"/>
</dbReference>
<dbReference type="GO" id="GO:0045087">
    <property type="term" value="P:innate immune response"/>
    <property type="evidence" value="ECO:0007669"/>
    <property type="project" value="UniProtKB-KW"/>
</dbReference>
<dbReference type="GO" id="GO:0048525">
    <property type="term" value="P:negative regulation of viral process"/>
    <property type="evidence" value="ECO:0000314"/>
    <property type="project" value="MGI"/>
</dbReference>
<dbReference type="GO" id="GO:0006164">
    <property type="term" value="P:purine nucleotide biosynthetic process"/>
    <property type="evidence" value="ECO:0000314"/>
    <property type="project" value="UniProtKB"/>
</dbReference>
<dbReference type="GO" id="GO:0009615">
    <property type="term" value="P:response to virus"/>
    <property type="evidence" value="ECO:0000304"/>
    <property type="project" value="UniProtKB"/>
</dbReference>
<dbReference type="CDD" id="cd05400">
    <property type="entry name" value="NT_2-5OAS_ClassI-CCAase"/>
    <property type="match status" value="1"/>
</dbReference>
<dbReference type="FunFam" id="1.10.1410.20:FF:000001">
    <property type="entry name" value="2'-5'-oligoadenylate synthetase 1"/>
    <property type="match status" value="1"/>
</dbReference>
<dbReference type="FunFam" id="3.30.460.10:FF:000007">
    <property type="entry name" value="2'-5'-oligoadenylate synthetase 1"/>
    <property type="match status" value="1"/>
</dbReference>
<dbReference type="Gene3D" id="1.10.1410.20">
    <property type="entry name" value="2'-5'-oligoadenylate synthetase 1, domain 2"/>
    <property type="match status" value="1"/>
</dbReference>
<dbReference type="Gene3D" id="3.30.460.10">
    <property type="entry name" value="Beta Polymerase, domain 2"/>
    <property type="match status" value="1"/>
</dbReference>
<dbReference type="InterPro" id="IPR018952">
    <property type="entry name" value="2-5-oligoAdlate_synth_1_dom2/C"/>
</dbReference>
<dbReference type="InterPro" id="IPR006117">
    <property type="entry name" value="2-5OAS_C_CS"/>
</dbReference>
<dbReference type="InterPro" id="IPR043518">
    <property type="entry name" value="2-5OAS_N_CS"/>
</dbReference>
<dbReference type="InterPro" id="IPR006116">
    <property type="entry name" value="NT_2-5OAS_ClassI-CCAase"/>
</dbReference>
<dbReference type="InterPro" id="IPR043519">
    <property type="entry name" value="NT_sf"/>
</dbReference>
<dbReference type="InterPro" id="IPR002934">
    <property type="entry name" value="Polymerase_NTP_transf_dom"/>
</dbReference>
<dbReference type="PANTHER" id="PTHR11258:SF13">
    <property type="entry name" value="2'-5'-OLIGOADENYLATE SYNTHASE 1"/>
    <property type="match status" value="1"/>
</dbReference>
<dbReference type="PANTHER" id="PTHR11258">
    <property type="entry name" value="2-5 OLIGOADENYLATE SYNTHETASE"/>
    <property type="match status" value="1"/>
</dbReference>
<dbReference type="Pfam" id="PF01909">
    <property type="entry name" value="NTP_transf_2"/>
    <property type="match status" value="1"/>
</dbReference>
<dbReference type="Pfam" id="PF10421">
    <property type="entry name" value="OAS1_C"/>
    <property type="match status" value="1"/>
</dbReference>
<dbReference type="SUPFAM" id="SSF81301">
    <property type="entry name" value="Nucleotidyltransferase"/>
    <property type="match status" value="1"/>
</dbReference>
<dbReference type="SUPFAM" id="SSF81631">
    <property type="entry name" value="PAP/OAS1 substrate-binding domain"/>
    <property type="match status" value="1"/>
</dbReference>
<dbReference type="PROSITE" id="PS00832">
    <property type="entry name" value="25A_SYNTH_1"/>
    <property type="match status" value="1"/>
</dbReference>
<dbReference type="PROSITE" id="PS00833">
    <property type="entry name" value="25A_SYNTH_2"/>
    <property type="match status" value="1"/>
</dbReference>
<dbReference type="PROSITE" id="PS50152">
    <property type="entry name" value="25A_SYNTH_3"/>
    <property type="match status" value="1"/>
</dbReference>
<protein>
    <recommendedName>
        <fullName>2'-5'-oligoadenylate synthase 1A</fullName>
        <shortName>(2-5')oligo(A) synthase 1A</shortName>
        <shortName>2-5A synthase 1A</shortName>
        <ecNumber evidence="3 4 6 11">2.7.7.84</ecNumber>
    </recommendedName>
    <alternativeName>
        <fullName>p42 OAS</fullName>
    </alternativeName>
</protein>
<sequence>MEHGLRSIPAWTLDKFIEDYLLPDTTFGADVKSAVNVVCDFLKERCFQGAAHPVRVSKVVKGGSSGKGTTLKGKSDADLVVFLNNLTSFEDQLNRRGEFIKEIKKQLYEVQHERRFRVKFEVQSSWWPNARSLSFKLSAPHLHQEVEFDVLPAFDVLGHVNTSSKPDPRIYAILIEECTSLGKDGEFSTCFTELQRNFLKQRPTKLKSLIRLVKHWYQLCKEKLGKPLPPQYALELLTVFAWEQGNGCYEFNTAQGFRTVLELVINYQHLRIYWTKYYDFQHQEVSKYLHRQLRKARPVILDPADPTGNVAGGNPEGWRRLAEEADVWLWYPCFIKKDGSRVSSWDVPTVVPVPFEQVEENWTCILL</sequence>
<reference key="1">
    <citation type="journal article" date="1986" name="Nucleic Acids Res.">
        <title>Mouse 2-5A synthetase cDNA: nucleotide sequence and comparison to human 2-5A synthetase.</title>
        <authorList>
            <person name="Ichii Y."/>
            <person name="Fukunaga R."/>
            <person name="Shiojiri S."/>
            <person name="Sokawa Y."/>
        </authorList>
    </citation>
    <scope>NUCLEOTIDE SEQUENCE [MRNA]</scope>
</reference>
<reference key="2">
    <citation type="journal article" date="1990" name="Virology">
        <title>A full-length murine 2-5A synthetase cDNA transfected in NIH-3T3 cells impairs EMCV but not VSV replication.</title>
        <authorList>
            <person name="Coccia E.M."/>
            <person name="Romeo G."/>
            <person name="Nissim A."/>
            <person name="Marziali G."/>
            <person name="Albertini R."/>
            <person name="Affabris E."/>
            <person name="Battistini A."/>
            <person name="Fiorucci G."/>
            <person name="Orsatti R."/>
            <person name="Rossi G.B."/>
            <person name="Chebath J."/>
        </authorList>
    </citation>
    <scope>NUCLEOTIDE SEQUENCE [MRNA]</scope>
    <scope>CATALYTIC ACTIVITY</scope>
</reference>
<reference key="3">
    <citation type="journal article" date="2002" name="J. Interferon Cytokine Res.">
        <title>Genomic structure of the mouse 2',5'-oligoadenylate synthetase gene family.</title>
        <authorList>
            <person name="Kakuta S."/>
            <person name="Shibata S."/>
            <person name="Iwakura Y."/>
        </authorList>
    </citation>
    <scope>NUCLEOTIDE SEQUENCE [MRNA]</scope>
    <scope>FUNCTION</scope>
    <scope>CATALYTIC ACTIVITY</scope>
    <scope>TISSUE SPECIFICITY</scope>
    <source>
        <strain>C57BL/6J</strain>
        <tissue>Spleen</tissue>
    </source>
</reference>
<reference key="4">
    <citation type="journal article" date="2005" name="Science">
        <title>The transcriptional landscape of the mammalian genome.</title>
        <authorList>
            <person name="Carninci P."/>
            <person name="Kasukawa T."/>
            <person name="Katayama S."/>
            <person name="Gough J."/>
            <person name="Frith M.C."/>
            <person name="Maeda N."/>
            <person name="Oyama R."/>
            <person name="Ravasi T."/>
            <person name="Lenhard B."/>
            <person name="Wells C."/>
            <person name="Kodzius R."/>
            <person name="Shimokawa K."/>
            <person name="Bajic V.B."/>
            <person name="Brenner S.E."/>
            <person name="Batalov S."/>
            <person name="Forrest A.R."/>
            <person name="Zavolan M."/>
            <person name="Davis M.J."/>
            <person name="Wilming L.G."/>
            <person name="Aidinis V."/>
            <person name="Allen J.E."/>
            <person name="Ambesi-Impiombato A."/>
            <person name="Apweiler R."/>
            <person name="Aturaliya R.N."/>
            <person name="Bailey T.L."/>
            <person name="Bansal M."/>
            <person name="Baxter L."/>
            <person name="Beisel K.W."/>
            <person name="Bersano T."/>
            <person name="Bono H."/>
            <person name="Chalk A.M."/>
            <person name="Chiu K.P."/>
            <person name="Choudhary V."/>
            <person name="Christoffels A."/>
            <person name="Clutterbuck D.R."/>
            <person name="Crowe M.L."/>
            <person name="Dalla E."/>
            <person name="Dalrymple B.P."/>
            <person name="de Bono B."/>
            <person name="Della Gatta G."/>
            <person name="di Bernardo D."/>
            <person name="Down T."/>
            <person name="Engstrom P."/>
            <person name="Fagiolini M."/>
            <person name="Faulkner G."/>
            <person name="Fletcher C.F."/>
            <person name="Fukushima T."/>
            <person name="Furuno M."/>
            <person name="Futaki S."/>
            <person name="Gariboldi M."/>
            <person name="Georgii-Hemming P."/>
            <person name="Gingeras T.R."/>
            <person name="Gojobori T."/>
            <person name="Green R.E."/>
            <person name="Gustincich S."/>
            <person name="Harbers M."/>
            <person name="Hayashi Y."/>
            <person name="Hensch T.K."/>
            <person name="Hirokawa N."/>
            <person name="Hill D."/>
            <person name="Huminiecki L."/>
            <person name="Iacono M."/>
            <person name="Ikeo K."/>
            <person name="Iwama A."/>
            <person name="Ishikawa T."/>
            <person name="Jakt M."/>
            <person name="Kanapin A."/>
            <person name="Katoh M."/>
            <person name="Kawasawa Y."/>
            <person name="Kelso J."/>
            <person name="Kitamura H."/>
            <person name="Kitano H."/>
            <person name="Kollias G."/>
            <person name="Krishnan S.P."/>
            <person name="Kruger A."/>
            <person name="Kummerfeld S.K."/>
            <person name="Kurochkin I.V."/>
            <person name="Lareau L.F."/>
            <person name="Lazarevic D."/>
            <person name="Lipovich L."/>
            <person name="Liu J."/>
            <person name="Liuni S."/>
            <person name="McWilliam S."/>
            <person name="Madan Babu M."/>
            <person name="Madera M."/>
            <person name="Marchionni L."/>
            <person name="Matsuda H."/>
            <person name="Matsuzawa S."/>
            <person name="Miki H."/>
            <person name="Mignone F."/>
            <person name="Miyake S."/>
            <person name="Morris K."/>
            <person name="Mottagui-Tabar S."/>
            <person name="Mulder N."/>
            <person name="Nakano N."/>
            <person name="Nakauchi H."/>
            <person name="Ng P."/>
            <person name="Nilsson R."/>
            <person name="Nishiguchi S."/>
            <person name="Nishikawa S."/>
            <person name="Nori F."/>
            <person name="Ohara O."/>
            <person name="Okazaki Y."/>
            <person name="Orlando V."/>
            <person name="Pang K.C."/>
            <person name="Pavan W.J."/>
            <person name="Pavesi G."/>
            <person name="Pesole G."/>
            <person name="Petrovsky N."/>
            <person name="Piazza S."/>
            <person name="Reed J."/>
            <person name="Reid J.F."/>
            <person name="Ring B.Z."/>
            <person name="Ringwald M."/>
            <person name="Rost B."/>
            <person name="Ruan Y."/>
            <person name="Salzberg S.L."/>
            <person name="Sandelin A."/>
            <person name="Schneider C."/>
            <person name="Schoenbach C."/>
            <person name="Sekiguchi K."/>
            <person name="Semple C.A."/>
            <person name="Seno S."/>
            <person name="Sessa L."/>
            <person name="Sheng Y."/>
            <person name="Shibata Y."/>
            <person name="Shimada H."/>
            <person name="Shimada K."/>
            <person name="Silva D."/>
            <person name="Sinclair B."/>
            <person name="Sperling S."/>
            <person name="Stupka E."/>
            <person name="Sugiura K."/>
            <person name="Sultana R."/>
            <person name="Takenaka Y."/>
            <person name="Taki K."/>
            <person name="Tammoja K."/>
            <person name="Tan S.L."/>
            <person name="Tang S."/>
            <person name="Taylor M.S."/>
            <person name="Tegner J."/>
            <person name="Teichmann S.A."/>
            <person name="Ueda H.R."/>
            <person name="van Nimwegen E."/>
            <person name="Verardo R."/>
            <person name="Wei C.L."/>
            <person name="Yagi K."/>
            <person name="Yamanishi H."/>
            <person name="Zabarovsky E."/>
            <person name="Zhu S."/>
            <person name="Zimmer A."/>
            <person name="Hide W."/>
            <person name="Bult C."/>
            <person name="Grimmond S.M."/>
            <person name="Teasdale R.D."/>
            <person name="Liu E.T."/>
            <person name="Brusic V."/>
            <person name="Quackenbush J."/>
            <person name="Wahlestedt C."/>
            <person name="Mattick J.S."/>
            <person name="Hume D.A."/>
            <person name="Kai C."/>
            <person name="Sasaki D."/>
            <person name="Tomaru Y."/>
            <person name="Fukuda S."/>
            <person name="Kanamori-Katayama M."/>
            <person name="Suzuki M."/>
            <person name="Aoki J."/>
            <person name="Arakawa T."/>
            <person name="Iida J."/>
            <person name="Imamura K."/>
            <person name="Itoh M."/>
            <person name="Kato T."/>
            <person name="Kawaji H."/>
            <person name="Kawagashira N."/>
            <person name="Kawashima T."/>
            <person name="Kojima M."/>
            <person name="Kondo S."/>
            <person name="Konno H."/>
            <person name="Nakano K."/>
            <person name="Ninomiya N."/>
            <person name="Nishio T."/>
            <person name="Okada M."/>
            <person name="Plessy C."/>
            <person name="Shibata K."/>
            <person name="Shiraki T."/>
            <person name="Suzuki S."/>
            <person name="Tagami M."/>
            <person name="Waki K."/>
            <person name="Watahiki A."/>
            <person name="Okamura-Oho Y."/>
            <person name="Suzuki H."/>
            <person name="Kawai J."/>
            <person name="Hayashizaki Y."/>
        </authorList>
    </citation>
    <scope>NUCLEOTIDE SEQUENCE [LARGE SCALE MRNA]</scope>
    <source>
        <strain>C57BL/6J</strain>
        <tissue>Bone marrow</tissue>
    </source>
</reference>
<reference key="5">
    <citation type="journal article" date="2009" name="PLoS Biol.">
        <title>Lineage-specific biology revealed by a finished genome assembly of the mouse.</title>
        <authorList>
            <person name="Church D.M."/>
            <person name="Goodstadt L."/>
            <person name="Hillier L.W."/>
            <person name="Zody M.C."/>
            <person name="Goldstein S."/>
            <person name="She X."/>
            <person name="Bult C.J."/>
            <person name="Agarwala R."/>
            <person name="Cherry J.L."/>
            <person name="DiCuccio M."/>
            <person name="Hlavina W."/>
            <person name="Kapustin Y."/>
            <person name="Meric P."/>
            <person name="Maglott D."/>
            <person name="Birtle Z."/>
            <person name="Marques A.C."/>
            <person name="Graves T."/>
            <person name="Zhou S."/>
            <person name="Teague B."/>
            <person name="Potamousis K."/>
            <person name="Churas C."/>
            <person name="Place M."/>
            <person name="Herschleb J."/>
            <person name="Runnheim R."/>
            <person name="Forrest D."/>
            <person name="Amos-Landgraf J."/>
            <person name="Schwartz D.C."/>
            <person name="Cheng Z."/>
            <person name="Lindblad-Toh K."/>
            <person name="Eichler E.E."/>
            <person name="Ponting C.P."/>
        </authorList>
    </citation>
    <scope>NUCLEOTIDE SEQUENCE [LARGE SCALE GENOMIC DNA]</scope>
    <source>
        <strain>C57BL/6J</strain>
    </source>
</reference>
<reference key="6">
    <citation type="submission" date="2005-09" db="EMBL/GenBank/DDBJ databases">
        <authorList>
            <person name="Mural R.J."/>
            <person name="Adams M.D."/>
            <person name="Myers E.W."/>
            <person name="Smith H.O."/>
            <person name="Venter J.C."/>
        </authorList>
    </citation>
    <scope>NUCLEOTIDE SEQUENCE [LARGE SCALE GENOMIC DNA]</scope>
</reference>
<reference key="7">
    <citation type="journal article" date="2004" name="Genome Res.">
        <title>The status, quality, and expansion of the NIH full-length cDNA project: the Mammalian Gene Collection (MGC).</title>
        <authorList>
            <consortium name="The MGC Project Team"/>
        </authorList>
    </citation>
    <scope>NUCLEOTIDE SEQUENCE [LARGE SCALE MRNA]</scope>
    <source>
        <strain>NMRI</strain>
        <tissue>Mammary tumor</tissue>
    </source>
</reference>
<reference key="8">
    <citation type="journal article" date="1991" name="Nucleic Acids Res.">
        <title>The murine 2-5A synthetase locus: three distinct transcripts from two linked genes.</title>
        <authorList>
            <person name="Rutherford M.N."/>
            <person name="Kumar A."/>
            <person name="Nissim A."/>
            <person name="Chebath J."/>
            <person name="Williams B.R.G."/>
        </authorList>
    </citation>
    <scope>NUCLEOTIDE SEQUENCE [MRNA] OF 14-367</scope>
    <scope>INDUCTION</scope>
</reference>
<reference key="9">
    <citation type="journal article" date="2005" name="Mol. Cell. Biol.">
        <title>Mice deficient in oocyte-specific oligoadenylate synthetase-like protein OAS1D display reduced fertility.</title>
        <authorList>
            <person name="Yan W."/>
            <person name="Ma L."/>
            <person name="Stein P."/>
            <person name="Pangas S.A."/>
            <person name="Burns K.H."/>
            <person name="Bai Y."/>
            <person name="Schultz R.M."/>
            <person name="Matzuk M.M."/>
        </authorList>
    </citation>
    <scope>CATALYTIC ACTIVITY</scope>
    <scope>INTERACTION WITH OAS1D</scope>
    <scope>SUBCELLULAR LOCATION</scope>
    <scope>TISSUE SPECIFICITY</scope>
    <scope>DEVELOPMENTAL STAGE</scope>
    <scope>INDUCTION</scope>
</reference>
<reference key="10">
    <citation type="journal article" date="2006" name="J. Mol. Evol.">
        <title>The mammalian 2'-5' oligoadenylate synthetase gene family: evidence for concerted evolution of paralogous Oas1 genes in Rodentia and Artiodactyla.</title>
        <authorList>
            <person name="Perelygin A.A."/>
            <person name="Zharkikh A.A."/>
            <person name="Scherbik S.V."/>
            <person name="Brinton M.A."/>
        </authorList>
    </citation>
    <scope>REVIEW</scope>
</reference>
<reference key="11">
    <citation type="journal article" date="2011" name="J. Interferon Cytokine Res.">
        <title>The oligoadenylate synthetase family: an ancient protein family with multiple antiviral activities.</title>
        <authorList>
            <person name="Kristiansen H."/>
            <person name="Gad H.H."/>
            <person name="Eskildsen-Larsen S."/>
            <person name="Despres P."/>
            <person name="Hartmann R."/>
        </authorList>
    </citation>
    <scope>REVIEW ON FUNCTION</scope>
</reference>
<reference key="12">
    <citation type="journal article" date="2012" name="Virology">
        <title>Activation of Oas1a gene expression by type I IFN requires both STAT1 and STAT2 while only STAT2 is required for Oas1b activation.</title>
        <authorList>
            <person name="Pulit-Penaloza J.A."/>
            <person name="Scherbik S.V."/>
            <person name="Brinton M.A."/>
        </authorList>
    </citation>
    <scope>INDUCTION</scope>
</reference>
<reference key="13">
    <citation type="journal article" date="2016" name="Infect. Genet. Evol.">
        <title>The role of mouse 2',5'-oligoadenylate synthetase 1 paralogs.</title>
        <authorList>
            <person name="Elkhateeb E."/>
            <person name="Tag-El-Din-Hassan H.T."/>
            <person name="Sasaki N."/>
            <person name="Torigoe D."/>
            <person name="Morimatsu M."/>
            <person name="Agui T."/>
        </authorList>
    </citation>
    <scope>CATALYTIC ACTIVITY</scope>
    <scope>TISSUE SPECIFICITY</scope>
    <scope>DEVELOPMENTAL STAGE</scope>
    <scope>INDUCTION</scope>
</reference>
<reference key="14">
    <citation type="journal article" date="2021" name="Science">
        <title>A prenylated dsRNA sensor protects against severe COVID-19.</title>
        <authorList>
            <consortium name="ISARIC4C Investigators"/>
            <person name="Wickenhagen A."/>
            <person name="Sugrue E."/>
            <person name="Lytras S."/>
            <person name="Kuchi S."/>
            <person name="Noerenberg M."/>
            <person name="Turnbull M.L."/>
            <person name="Loney C."/>
            <person name="Herder V."/>
            <person name="Allan J."/>
            <person name="Jarmson I."/>
            <person name="Cameron-Ruiz N."/>
            <person name="Varjak M."/>
            <person name="Pinto R.M."/>
            <person name="Lee J.Y."/>
            <person name="Iselin L."/>
            <person name="Palmalux N."/>
            <person name="Stewart D.G."/>
            <person name="Swingler S."/>
            <person name="Greenwood E.J.D."/>
            <person name="Crozier T.W.M."/>
            <person name="Gu Q."/>
            <person name="Davies E.L."/>
            <person name="Clohisey S."/>
            <person name="Wang B."/>
            <person name="Trindade Maranhao Costa F."/>
            <person name="Freire Santana M."/>
            <person name="de Lima Ferreira L.C."/>
            <person name="Murphy L."/>
            <person name="Fawkes A."/>
            <person name="Meynert A."/>
            <person name="Grimes G."/>
            <person name="Da Silva Filho J.L."/>
            <person name="Marti M."/>
            <person name="Hughes J."/>
            <person name="Stanton R.J."/>
            <person name="Wang E.C.Y."/>
            <person name="Ho A."/>
            <person name="Davis I."/>
            <person name="Jarrett R.F."/>
            <person name="Castello A."/>
            <person name="Robertson D.L."/>
            <person name="Semple M.G."/>
            <person name="Openshaw P.J.M."/>
            <person name="Palmarini M."/>
            <person name="Lehner P.J."/>
            <person name="Baillie J.K."/>
            <person name="Rihn S.J."/>
            <person name="Wilson S.J."/>
        </authorList>
    </citation>
    <scope>FUNCTION</scope>
    <scope>ISOPRENYLATION AT CYS-364</scope>
</reference>